<keyword id="KW-1185">Reference proteome</keyword>
<keyword id="KW-0687">Ribonucleoprotein</keyword>
<keyword id="KW-0689">Ribosomal protein</keyword>
<dbReference type="EMBL" id="BC103272">
    <property type="protein sequence ID" value="AAI03273.1"/>
    <property type="molecule type" value="mRNA"/>
</dbReference>
<dbReference type="RefSeq" id="NP_001030578.1">
    <property type="nucleotide sequence ID" value="NM_001035501.1"/>
</dbReference>
<dbReference type="SMR" id="Q3SZ10"/>
<dbReference type="FunCoup" id="Q3SZ10">
    <property type="interactions" value="438"/>
</dbReference>
<dbReference type="STRING" id="9913.ENSBTAP00000070322"/>
<dbReference type="PaxDb" id="9913-ENSBTAP00000012541"/>
<dbReference type="Ensembl" id="ENSBTAT00000012541.4">
    <property type="protein sequence ID" value="ENSBTAP00000012541.3"/>
    <property type="gene ID" value="ENSBTAG00000009533.5"/>
</dbReference>
<dbReference type="GeneID" id="618440"/>
<dbReference type="KEGG" id="bta:618440"/>
<dbReference type="CTD" id="6123"/>
<dbReference type="VEuPathDB" id="HostDB:ENSBTAG00000009533"/>
<dbReference type="VGNC" id="VGNC:34117">
    <property type="gene designation" value="RPL3L"/>
</dbReference>
<dbReference type="eggNOG" id="KOG0746">
    <property type="taxonomic scope" value="Eukaryota"/>
</dbReference>
<dbReference type="GeneTree" id="ENSGT00390000017606"/>
<dbReference type="HOGENOM" id="CLU_033361_1_0_1"/>
<dbReference type="InParanoid" id="Q3SZ10"/>
<dbReference type="OMA" id="HVEDGKM"/>
<dbReference type="OrthoDB" id="1611972at2759"/>
<dbReference type="TreeFam" id="TF300555"/>
<dbReference type="Reactome" id="R-BTA-156827">
    <property type="pathway name" value="L13a-mediated translational silencing of Ceruloplasmin expression"/>
</dbReference>
<dbReference type="Reactome" id="R-BTA-1799339">
    <property type="pathway name" value="SRP-dependent cotranslational protein targeting to membrane"/>
</dbReference>
<dbReference type="Reactome" id="R-BTA-6791226">
    <property type="pathway name" value="Major pathway of rRNA processing in the nucleolus and cytosol"/>
</dbReference>
<dbReference type="Reactome" id="R-BTA-72689">
    <property type="pathway name" value="Formation of a pool of free 40S subunits"/>
</dbReference>
<dbReference type="Reactome" id="R-BTA-72706">
    <property type="pathway name" value="GTP hydrolysis and joining of the 60S ribosomal subunit"/>
</dbReference>
<dbReference type="Reactome" id="R-BTA-975956">
    <property type="pathway name" value="Nonsense Mediated Decay (NMD) independent of the Exon Junction Complex (EJC)"/>
</dbReference>
<dbReference type="Reactome" id="R-BTA-975957">
    <property type="pathway name" value="Nonsense Mediated Decay (NMD) enhanced by the Exon Junction Complex (EJC)"/>
</dbReference>
<dbReference type="Proteomes" id="UP000009136">
    <property type="component" value="Chromosome 25"/>
</dbReference>
<dbReference type="Bgee" id="ENSBTAG00000009533">
    <property type="expression patterns" value="Expressed in biceps femoris and 96 other cell types or tissues"/>
</dbReference>
<dbReference type="GO" id="GO:0022625">
    <property type="term" value="C:cytosolic large ribosomal subunit"/>
    <property type="evidence" value="ECO:0000318"/>
    <property type="project" value="GO_Central"/>
</dbReference>
<dbReference type="GO" id="GO:0003723">
    <property type="term" value="F:RNA binding"/>
    <property type="evidence" value="ECO:0000318"/>
    <property type="project" value="GO_Central"/>
</dbReference>
<dbReference type="GO" id="GO:0003735">
    <property type="term" value="F:structural constituent of ribosome"/>
    <property type="evidence" value="ECO:0000318"/>
    <property type="project" value="GO_Central"/>
</dbReference>
<dbReference type="GO" id="GO:0006412">
    <property type="term" value="P:translation"/>
    <property type="evidence" value="ECO:0000318"/>
    <property type="project" value="GO_Central"/>
</dbReference>
<dbReference type="FunFam" id="2.40.30.10:FF:000079">
    <property type="entry name" value="60S ribosomal protein L3"/>
    <property type="match status" value="1"/>
</dbReference>
<dbReference type="FunFam" id="3.30.1430.10:FF:000001">
    <property type="entry name" value="60S ribosomal protein L3"/>
    <property type="match status" value="1"/>
</dbReference>
<dbReference type="FunFam" id="4.10.960.10:FF:000001">
    <property type="entry name" value="60S ribosomal protein L3"/>
    <property type="match status" value="1"/>
</dbReference>
<dbReference type="FunFam" id="4.10.960.10:FF:000002">
    <property type="entry name" value="60S ribosomal protein L3"/>
    <property type="match status" value="1"/>
</dbReference>
<dbReference type="FunFam" id="2.40.30.10:FF:000351">
    <property type="entry name" value="Ribosomal protein L3"/>
    <property type="match status" value="1"/>
</dbReference>
<dbReference type="Gene3D" id="3.30.1430.10">
    <property type="match status" value="1"/>
</dbReference>
<dbReference type="Gene3D" id="4.10.960.10">
    <property type="entry name" value="Ribosomal protein L3, domain 3"/>
    <property type="match status" value="1"/>
</dbReference>
<dbReference type="Gene3D" id="2.40.30.10">
    <property type="entry name" value="Translation factors"/>
    <property type="match status" value="1"/>
</dbReference>
<dbReference type="InterPro" id="IPR045077">
    <property type="entry name" value="L3_arc_euk"/>
</dbReference>
<dbReference type="InterPro" id="IPR044892">
    <property type="entry name" value="Ribosomal_L3_dom_3_arc_sf"/>
</dbReference>
<dbReference type="InterPro" id="IPR000597">
    <property type="entry name" value="Ribosomal_uL3"/>
</dbReference>
<dbReference type="InterPro" id="IPR019926">
    <property type="entry name" value="Ribosomal_uL3_CS"/>
</dbReference>
<dbReference type="InterPro" id="IPR009000">
    <property type="entry name" value="Transl_B-barrel_sf"/>
</dbReference>
<dbReference type="PANTHER" id="PTHR11363">
    <property type="entry name" value="60S RIBOSOMAL PROTEIN L3-RELATED"/>
    <property type="match status" value="1"/>
</dbReference>
<dbReference type="PANTHER" id="PTHR11363:SF7">
    <property type="entry name" value="RIBOSOMAL PROTEIN UL3-LIKE"/>
    <property type="match status" value="1"/>
</dbReference>
<dbReference type="Pfam" id="PF00297">
    <property type="entry name" value="Ribosomal_L3"/>
    <property type="match status" value="1"/>
</dbReference>
<dbReference type="SUPFAM" id="SSF50447">
    <property type="entry name" value="Translation proteins"/>
    <property type="match status" value="1"/>
</dbReference>
<dbReference type="PROSITE" id="PS00474">
    <property type="entry name" value="RIBOSOMAL_L3"/>
    <property type="match status" value="1"/>
</dbReference>
<comment type="function">
    <text evidence="1">Heart- and skeletal muscle-specific component of the ribosome, which regulates muscle function. Component of the large ribosomal subunit in striated muscle cells: replaces the RPL3 paralog in the ribosome in these cells. The ribosome is a large ribonucleoprotein complex responsible for the synthesis of proteins in the cell. Inhibits myotube growth and muscle function.</text>
</comment>
<comment type="subunit">
    <text evidence="1">Component of the large ribosomal subunit in striated muscle cells.</text>
</comment>
<comment type="similarity">
    <text evidence="3">Belongs to the universal ribosomal protein uL3 family.</text>
</comment>
<sequence>MSHRKFSAPRHGHLGFLPHKRSHRHRGKVKTWPRDDPSQPVHLTAFLGYKAGMTHTLREVHRPGLKISKREEVEAVTIVETPPLVVVGVVGYVATPRGLRSFKTIFAEHLSDECRRRFYKDWHKSKKKAFTKACKRWRDADGKKQLQKDFAAMKKYCKVIRVIVHTQMKLLPFRQKKAHIMEVQLNGGTVAEKVAWAQARLEKQVPVHSVFSQNEIIDVIAVTKGRGIKGVTSRWHTKKLPRKTHKGLRKVACIGAWHPARVGCSIARAGQKGYHHRTELNKKIYRIGRGLHMEDGKVVKNNASTSYDVTDKSITPLGGFPHYGEVNNDFVMLKGCIAGTKKRVITLRKSLLVHHSRQALENIELKFIDTTSKFGHGRFQTAQEKRAFMGPQKKHLEKEKPETSGDL</sequence>
<proteinExistence type="evidence at transcript level"/>
<organism>
    <name type="scientific">Bos taurus</name>
    <name type="common">Bovine</name>
    <dbReference type="NCBI Taxonomy" id="9913"/>
    <lineage>
        <taxon>Eukaryota</taxon>
        <taxon>Metazoa</taxon>
        <taxon>Chordata</taxon>
        <taxon>Craniata</taxon>
        <taxon>Vertebrata</taxon>
        <taxon>Euteleostomi</taxon>
        <taxon>Mammalia</taxon>
        <taxon>Eutheria</taxon>
        <taxon>Laurasiatheria</taxon>
        <taxon>Artiodactyla</taxon>
        <taxon>Ruminantia</taxon>
        <taxon>Pecora</taxon>
        <taxon>Bovidae</taxon>
        <taxon>Bovinae</taxon>
        <taxon>Bos</taxon>
    </lineage>
</organism>
<feature type="chain" id="PRO_0000077232" description="Large ribosomal subunit protein uL3-like">
    <location>
        <begin position="1"/>
        <end position="407"/>
    </location>
</feature>
<feature type="region of interest" description="Disordered" evidence="2">
    <location>
        <begin position="1"/>
        <end position="35"/>
    </location>
</feature>
<feature type="region of interest" description="Disordered" evidence="2">
    <location>
        <begin position="383"/>
        <end position="407"/>
    </location>
</feature>
<feature type="compositionally biased region" description="Basic residues" evidence="2">
    <location>
        <begin position="1"/>
        <end position="31"/>
    </location>
</feature>
<feature type="compositionally biased region" description="Basic and acidic residues" evidence="2">
    <location>
        <begin position="394"/>
        <end position="407"/>
    </location>
</feature>
<reference key="1">
    <citation type="submission" date="2005-08" db="EMBL/GenBank/DDBJ databases">
        <authorList>
            <consortium name="NIH - Mammalian Gene Collection (MGC) project"/>
        </authorList>
    </citation>
    <scope>NUCLEOTIDE SEQUENCE [LARGE SCALE MRNA]</scope>
    <source>
        <strain>Hereford</strain>
        <tissue>Rumen</tissue>
    </source>
</reference>
<accession>Q3SZ10</accession>
<evidence type="ECO:0000250" key="1">
    <source>
        <dbReference type="UniProtKB" id="E9PWZ3"/>
    </source>
</evidence>
<evidence type="ECO:0000256" key="2">
    <source>
        <dbReference type="SAM" id="MobiDB-lite"/>
    </source>
</evidence>
<evidence type="ECO:0000305" key="3"/>
<protein>
    <recommendedName>
        <fullName evidence="3">Large ribosomal subunit protein uL3-like</fullName>
    </recommendedName>
    <alternativeName>
        <fullName evidence="3">60S ribosomal protein L3-like</fullName>
    </alternativeName>
</protein>
<gene>
    <name type="primary">RPL3L</name>
</gene>
<name>RL3L_BOVIN</name>